<name>RSMG_ALKOO</name>
<comment type="function">
    <text evidence="1">Specifically methylates the N7 position of a guanine in 16S rRNA.</text>
</comment>
<comment type="subcellular location">
    <subcellularLocation>
        <location evidence="1">Cytoplasm</location>
    </subcellularLocation>
</comment>
<comment type="similarity">
    <text evidence="1">Belongs to the methyltransferase superfamily. RNA methyltransferase RsmG family.</text>
</comment>
<accession>A8MKR7</accession>
<organism>
    <name type="scientific">Alkaliphilus oremlandii (strain OhILAs)</name>
    <name type="common">Clostridium oremlandii (strain OhILAs)</name>
    <dbReference type="NCBI Taxonomy" id="350688"/>
    <lineage>
        <taxon>Bacteria</taxon>
        <taxon>Bacillati</taxon>
        <taxon>Bacillota</taxon>
        <taxon>Clostridia</taxon>
        <taxon>Peptostreptococcales</taxon>
        <taxon>Natronincolaceae</taxon>
        <taxon>Alkaliphilus</taxon>
    </lineage>
</organism>
<protein>
    <recommendedName>
        <fullName evidence="1">Ribosomal RNA small subunit methyltransferase G</fullName>
        <ecNumber evidence="1">2.1.1.-</ecNumber>
    </recommendedName>
    <alternativeName>
        <fullName evidence="1">16S rRNA 7-methylguanosine methyltransferase</fullName>
        <shortName evidence="1">16S rRNA m7G methyltransferase</shortName>
    </alternativeName>
</protein>
<sequence>MELKDILKEGAQGLNIEITDAQINQLIKYKDILLEWNQKMNLTAIEEEKDVMIKHFLDSLSCIQSKYLKREGKMIDVGTGAGFPGVPLKIALPGIELTLLDSLRKRISFLEEVCAETKLGQVDFVHGRAEDIGQSKDYREKYDYAVSRAVAALNVLVEYCLPFVKVGGYFICQKGPQIIEELPDAEKAIKVLGGEVVEQISVDLPFSDITHHILVIKKIKQTPSKYPRKAGKPSKEPIK</sequence>
<evidence type="ECO:0000255" key="1">
    <source>
        <dbReference type="HAMAP-Rule" id="MF_00074"/>
    </source>
</evidence>
<proteinExistence type="inferred from homology"/>
<feature type="chain" id="PRO_1000057504" description="Ribosomal RNA small subunit methyltransferase G">
    <location>
        <begin position="1"/>
        <end position="239"/>
    </location>
</feature>
<feature type="binding site" evidence="1">
    <location>
        <position position="78"/>
    </location>
    <ligand>
        <name>S-adenosyl-L-methionine</name>
        <dbReference type="ChEBI" id="CHEBI:59789"/>
    </ligand>
</feature>
<feature type="binding site" evidence="1">
    <location>
        <position position="83"/>
    </location>
    <ligand>
        <name>S-adenosyl-L-methionine</name>
        <dbReference type="ChEBI" id="CHEBI:59789"/>
    </ligand>
</feature>
<feature type="binding site" evidence="1">
    <location>
        <begin position="129"/>
        <end position="130"/>
    </location>
    <ligand>
        <name>S-adenosyl-L-methionine</name>
        <dbReference type="ChEBI" id="CHEBI:59789"/>
    </ligand>
</feature>
<feature type="binding site" evidence="1">
    <location>
        <position position="148"/>
    </location>
    <ligand>
        <name>S-adenosyl-L-methionine</name>
        <dbReference type="ChEBI" id="CHEBI:59789"/>
    </ligand>
</feature>
<gene>
    <name evidence="1" type="primary">rsmG</name>
    <name type="ordered locus">Clos_2870</name>
</gene>
<dbReference type="EC" id="2.1.1.-" evidence="1"/>
<dbReference type="EMBL" id="CP000853">
    <property type="protein sequence ID" value="ABW20399.1"/>
    <property type="molecule type" value="Genomic_DNA"/>
</dbReference>
<dbReference type="RefSeq" id="WP_012160706.1">
    <property type="nucleotide sequence ID" value="NC_009922.1"/>
</dbReference>
<dbReference type="SMR" id="A8MKR7"/>
<dbReference type="STRING" id="350688.Clos_2870"/>
<dbReference type="KEGG" id="aoe:Clos_2870"/>
<dbReference type="eggNOG" id="COG0357">
    <property type="taxonomic scope" value="Bacteria"/>
</dbReference>
<dbReference type="HOGENOM" id="CLU_065341_0_0_9"/>
<dbReference type="OrthoDB" id="9808773at2"/>
<dbReference type="Proteomes" id="UP000000269">
    <property type="component" value="Chromosome"/>
</dbReference>
<dbReference type="GO" id="GO:0005829">
    <property type="term" value="C:cytosol"/>
    <property type="evidence" value="ECO:0007669"/>
    <property type="project" value="TreeGrafter"/>
</dbReference>
<dbReference type="GO" id="GO:0070043">
    <property type="term" value="F:rRNA (guanine-N7-)-methyltransferase activity"/>
    <property type="evidence" value="ECO:0007669"/>
    <property type="project" value="UniProtKB-UniRule"/>
</dbReference>
<dbReference type="CDD" id="cd02440">
    <property type="entry name" value="AdoMet_MTases"/>
    <property type="match status" value="1"/>
</dbReference>
<dbReference type="FunFam" id="3.40.50.150:FF:000041">
    <property type="entry name" value="Ribosomal RNA small subunit methyltransferase G"/>
    <property type="match status" value="1"/>
</dbReference>
<dbReference type="Gene3D" id="3.40.50.150">
    <property type="entry name" value="Vaccinia Virus protein VP39"/>
    <property type="match status" value="1"/>
</dbReference>
<dbReference type="HAMAP" id="MF_00074">
    <property type="entry name" value="16SrRNA_methyltr_G"/>
    <property type="match status" value="1"/>
</dbReference>
<dbReference type="InterPro" id="IPR003682">
    <property type="entry name" value="rRNA_ssu_MeTfrase_G"/>
</dbReference>
<dbReference type="InterPro" id="IPR029063">
    <property type="entry name" value="SAM-dependent_MTases_sf"/>
</dbReference>
<dbReference type="NCBIfam" id="TIGR00138">
    <property type="entry name" value="rsmG_gidB"/>
    <property type="match status" value="1"/>
</dbReference>
<dbReference type="PANTHER" id="PTHR31760">
    <property type="entry name" value="S-ADENOSYL-L-METHIONINE-DEPENDENT METHYLTRANSFERASES SUPERFAMILY PROTEIN"/>
    <property type="match status" value="1"/>
</dbReference>
<dbReference type="PANTHER" id="PTHR31760:SF0">
    <property type="entry name" value="S-ADENOSYL-L-METHIONINE-DEPENDENT METHYLTRANSFERASES SUPERFAMILY PROTEIN"/>
    <property type="match status" value="1"/>
</dbReference>
<dbReference type="Pfam" id="PF02527">
    <property type="entry name" value="GidB"/>
    <property type="match status" value="1"/>
</dbReference>
<dbReference type="PIRSF" id="PIRSF003078">
    <property type="entry name" value="GidB"/>
    <property type="match status" value="1"/>
</dbReference>
<dbReference type="SUPFAM" id="SSF53335">
    <property type="entry name" value="S-adenosyl-L-methionine-dependent methyltransferases"/>
    <property type="match status" value="1"/>
</dbReference>
<keyword id="KW-0963">Cytoplasm</keyword>
<keyword id="KW-0489">Methyltransferase</keyword>
<keyword id="KW-1185">Reference proteome</keyword>
<keyword id="KW-0698">rRNA processing</keyword>
<keyword id="KW-0949">S-adenosyl-L-methionine</keyword>
<keyword id="KW-0808">Transferase</keyword>
<reference key="1">
    <citation type="submission" date="2007-10" db="EMBL/GenBank/DDBJ databases">
        <title>Complete genome of Alkaliphilus oremlandii OhILAs.</title>
        <authorList>
            <person name="Copeland A."/>
            <person name="Lucas S."/>
            <person name="Lapidus A."/>
            <person name="Barry K."/>
            <person name="Detter J.C."/>
            <person name="Glavina del Rio T."/>
            <person name="Hammon N."/>
            <person name="Israni S."/>
            <person name="Dalin E."/>
            <person name="Tice H."/>
            <person name="Pitluck S."/>
            <person name="Chain P."/>
            <person name="Malfatti S."/>
            <person name="Shin M."/>
            <person name="Vergez L."/>
            <person name="Schmutz J."/>
            <person name="Larimer F."/>
            <person name="Land M."/>
            <person name="Hauser L."/>
            <person name="Kyrpides N."/>
            <person name="Mikhailova N."/>
            <person name="Stolz J.F."/>
            <person name="Dawson A."/>
            <person name="Fisher E."/>
            <person name="Crable B."/>
            <person name="Perera E."/>
            <person name="Lisak J."/>
            <person name="Ranganathan M."/>
            <person name="Basu P."/>
            <person name="Richardson P."/>
        </authorList>
    </citation>
    <scope>NUCLEOTIDE SEQUENCE [LARGE SCALE GENOMIC DNA]</scope>
    <source>
        <strain>OhILAs</strain>
    </source>
</reference>